<comment type="function">
    <text evidence="1">Catalyzes the attachment of serine to tRNA(Ser). Is also able to aminoacylate tRNA(Sec) with serine, to form the misacylated tRNA L-seryl-tRNA(Sec), which will be further converted into selenocysteinyl-tRNA(Sec).</text>
</comment>
<comment type="catalytic activity">
    <reaction evidence="1">
        <text>tRNA(Ser) + L-serine + ATP = L-seryl-tRNA(Ser) + AMP + diphosphate + H(+)</text>
        <dbReference type="Rhea" id="RHEA:12292"/>
        <dbReference type="Rhea" id="RHEA-COMP:9669"/>
        <dbReference type="Rhea" id="RHEA-COMP:9703"/>
        <dbReference type="ChEBI" id="CHEBI:15378"/>
        <dbReference type="ChEBI" id="CHEBI:30616"/>
        <dbReference type="ChEBI" id="CHEBI:33019"/>
        <dbReference type="ChEBI" id="CHEBI:33384"/>
        <dbReference type="ChEBI" id="CHEBI:78442"/>
        <dbReference type="ChEBI" id="CHEBI:78533"/>
        <dbReference type="ChEBI" id="CHEBI:456215"/>
        <dbReference type="EC" id="6.1.1.11"/>
    </reaction>
</comment>
<comment type="catalytic activity">
    <reaction evidence="1">
        <text>tRNA(Sec) + L-serine + ATP = L-seryl-tRNA(Sec) + AMP + diphosphate + H(+)</text>
        <dbReference type="Rhea" id="RHEA:42580"/>
        <dbReference type="Rhea" id="RHEA-COMP:9742"/>
        <dbReference type="Rhea" id="RHEA-COMP:10128"/>
        <dbReference type="ChEBI" id="CHEBI:15378"/>
        <dbReference type="ChEBI" id="CHEBI:30616"/>
        <dbReference type="ChEBI" id="CHEBI:33019"/>
        <dbReference type="ChEBI" id="CHEBI:33384"/>
        <dbReference type="ChEBI" id="CHEBI:78442"/>
        <dbReference type="ChEBI" id="CHEBI:78533"/>
        <dbReference type="ChEBI" id="CHEBI:456215"/>
        <dbReference type="EC" id="6.1.1.11"/>
    </reaction>
</comment>
<comment type="pathway">
    <text evidence="1">Aminoacyl-tRNA biosynthesis; selenocysteinyl-tRNA(Sec) biosynthesis; L-seryl-tRNA(Sec) from L-serine and tRNA(Sec): step 1/1.</text>
</comment>
<comment type="subunit">
    <text evidence="1">Homodimer. The tRNA molecule binds across the dimer.</text>
</comment>
<comment type="subcellular location">
    <subcellularLocation>
        <location evidence="1">Cytoplasm</location>
    </subcellularLocation>
</comment>
<comment type="domain">
    <text evidence="1">Consists of two distinct domains, a catalytic core and a N-terminal extension that is involved in tRNA binding.</text>
</comment>
<comment type="similarity">
    <text evidence="1">Belongs to the class-II aminoacyl-tRNA synthetase family. Type-1 seryl-tRNA synthetase subfamily.</text>
</comment>
<feature type="chain" id="PRO_1000077222" description="Serine--tRNA ligase">
    <location>
        <begin position="1"/>
        <end position="418"/>
    </location>
</feature>
<feature type="binding site" evidence="1">
    <location>
        <begin position="231"/>
        <end position="233"/>
    </location>
    <ligand>
        <name>L-serine</name>
        <dbReference type="ChEBI" id="CHEBI:33384"/>
    </ligand>
</feature>
<feature type="binding site" evidence="1">
    <location>
        <begin position="262"/>
        <end position="264"/>
    </location>
    <ligand>
        <name>ATP</name>
        <dbReference type="ChEBI" id="CHEBI:30616"/>
    </ligand>
</feature>
<feature type="binding site" evidence="1">
    <location>
        <position position="285"/>
    </location>
    <ligand>
        <name>L-serine</name>
        <dbReference type="ChEBI" id="CHEBI:33384"/>
    </ligand>
</feature>
<feature type="binding site" evidence="1">
    <location>
        <begin position="349"/>
        <end position="352"/>
    </location>
    <ligand>
        <name>ATP</name>
        <dbReference type="ChEBI" id="CHEBI:30616"/>
    </ligand>
</feature>
<feature type="binding site" evidence="1">
    <location>
        <position position="385"/>
    </location>
    <ligand>
        <name>L-serine</name>
        <dbReference type="ChEBI" id="CHEBI:33384"/>
    </ligand>
</feature>
<protein>
    <recommendedName>
        <fullName evidence="1">Serine--tRNA ligase</fullName>
        <ecNumber evidence="1">6.1.1.11</ecNumber>
    </recommendedName>
    <alternativeName>
        <fullName evidence="1">Seryl-tRNA synthetase</fullName>
        <shortName evidence="1">SerRS</shortName>
    </alternativeName>
    <alternativeName>
        <fullName evidence="1">Seryl-tRNA(Ser/Sec) synthetase</fullName>
    </alternativeName>
</protein>
<accession>B1AI95</accession>
<keyword id="KW-0030">Aminoacyl-tRNA synthetase</keyword>
<keyword id="KW-0067">ATP-binding</keyword>
<keyword id="KW-0963">Cytoplasm</keyword>
<keyword id="KW-0436">Ligase</keyword>
<keyword id="KW-0547">Nucleotide-binding</keyword>
<keyword id="KW-0648">Protein biosynthesis</keyword>
<gene>
    <name evidence="1" type="primary">serS</name>
    <name type="ordered locus">UPA3_0109</name>
</gene>
<organism>
    <name type="scientific">Ureaplasma parvum serovar 3 (strain ATCC 27815 / 27 / NCTC 11736)</name>
    <dbReference type="NCBI Taxonomy" id="505682"/>
    <lineage>
        <taxon>Bacteria</taxon>
        <taxon>Bacillati</taxon>
        <taxon>Mycoplasmatota</taxon>
        <taxon>Mycoplasmoidales</taxon>
        <taxon>Mycoplasmoidaceae</taxon>
        <taxon>Ureaplasma</taxon>
    </lineage>
</organism>
<evidence type="ECO:0000255" key="1">
    <source>
        <dbReference type="HAMAP-Rule" id="MF_00176"/>
    </source>
</evidence>
<dbReference type="EC" id="6.1.1.11" evidence="1"/>
<dbReference type="EMBL" id="CP000942">
    <property type="protein sequence ID" value="ACA33140.1"/>
    <property type="molecule type" value="Genomic_DNA"/>
</dbReference>
<dbReference type="RefSeq" id="WP_006688660.1">
    <property type="nucleotide sequence ID" value="NC_010503.1"/>
</dbReference>
<dbReference type="SMR" id="B1AI95"/>
<dbReference type="GeneID" id="29672764"/>
<dbReference type="KEGG" id="upa:UPA3_0109"/>
<dbReference type="HOGENOM" id="CLU_023797_1_1_14"/>
<dbReference type="UniPathway" id="UPA00906">
    <property type="reaction ID" value="UER00895"/>
</dbReference>
<dbReference type="Proteomes" id="UP000002162">
    <property type="component" value="Chromosome"/>
</dbReference>
<dbReference type="GO" id="GO:0005737">
    <property type="term" value="C:cytoplasm"/>
    <property type="evidence" value="ECO:0007669"/>
    <property type="project" value="UniProtKB-SubCell"/>
</dbReference>
<dbReference type="GO" id="GO:0005524">
    <property type="term" value="F:ATP binding"/>
    <property type="evidence" value="ECO:0007669"/>
    <property type="project" value="UniProtKB-UniRule"/>
</dbReference>
<dbReference type="GO" id="GO:0004828">
    <property type="term" value="F:serine-tRNA ligase activity"/>
    <property type="evidence" value="ECO:0007669"/>
    <property type="project" value="UniProtKB-UniRule"/>
</dbReference>
<dbReference type="GO" id="GO:0016260">
    <property type="term" value="P:selenocysteine biosynthetic process"/>
    <property type="evidence" value="ECO:0007669"/>
    <property type="project" value="UniProtKB-UniRule"/>
</dbReference>
<dbReference type="GO" id="GO:0006434">
    <property type="term" value="P:seryl-tRNA aminoacylation"/>
    <property type="evidence" value="ECO:0007669"/>
    <property type="project" value="UniProtKB-UniRule"/>
</dbReference>
<dbReference type="CDD" id="cd00770">
    <property type="entry name" value="SerRS_core"/>
    <property type="match status" value="1"/>
</dbReference>
<dbReference type="Gene3D" id="3.30.930.10">
    <property type="entry name" value="Bira Bifunctional Protein, Domain 2"/>
    <property type="match status" value="1"/>
</dbReference>
<dbReference type="Gene3D" id="1.10.287.40">
    <property type="entry name" value="Serine-tRNA synthetase, tRNA binding domain"/>
    <property type="match status" value="1"/>
</dbReference>
<dbReference type="HAMAP" id="MF_00176">
    <property type="entry name" value="Ser_tRNA_synth_type1"/>
    <property type="match status" value="1"/>
</dbReference>
<dbReference type="InterPro" id="IPR002314">
    <property type="entry name" value="aa-tRNA-synt_IIb"/>
</dbReference>
<dbReference type="InterPro" id="IPR006195">
    <property type="entry name" value="aa-tRNA-synth_II"/>
</dbReference>
<dbReference type="InterPro" id="IPR045864">
    <property type="entry name" value="aa-tRNA-synth_II/BPL/LPL"/>
</dbReference>
<dbReference type="InterPro" id="IPR002317">
    <property type="entry name" value="Ser-tRNA-ligase_type_1"/>
</dbReference>
<dbReference type="InterPro" id="IPR015866">
    <property type="entry name" value="Ser-tRNA-synth_1_N"/>
</dbReference>
<dbReference type="InterPro" id="IPR042103">
    <property type="entry name" value="SerRS_1_N_sf"/>
</dbReference>
<dbReference type="InterPro" id="IPR033729">
    <property type="entry name" value="SerRS_core"/>
</dbReference>
<dbReference type="InterPro" id="IPR010978">
    <property type="entry name" value="tRNA-bd_arm"/>
</dbReference>
<dbReference type="NCBIfam" id="TIGR00414">
    <property type="entry name" value="serS"/>
    <property type="match status" value="1"/>
</dbReference>
<dbReference type="PANTHER" id="PTHR43697:SF1">
    <property type="entry name" value="SERINE--TRNA LIGASE"/>
    <property type="match status" value="1"/>
</dbReference>
<dbReference type="PANTHER" id="PTHR43697">
    <property type="entry name" value="SERYL-TRNA SYNTHETASE"/>
    <property type="match status" value="1"/>
</dbReference>
<dbReference type="Pfam" id="PF02403">
    <property type="entry name" value="Seryl_tRNA_N"/>
    <property type="match status" value="1"/>
</dbReference>
<dbReference type="Pfam" id="PF00587">
    <property type="entry name" value="tRNA-synt_2b"/>
    <property type="match status" value="1"/>
</dbReference>
<dbReference type="PIRSF" id="PIRSF001529">
    <property type="entry name" value="Ser-tRNA-synth_IIa"/>
    <property type="match status" value="1"/>
</dbReference>
<dbReference type="PRINTS" id="PR00981">
    <property type="entry name" value="TRNASYNTHSER"/>
</dbReference>
<dbReference type="SUPFAM" id="SSF55681">
    <property type="entry name" value="Class II aaRS and biotin synthetases"/>
    <property type="match status" value="1"/>
</dbReference>
<dbReference type="SUPFAM" id="SSF46589">
    <property type="entry name" value="tRNA-binding arm"/>
    <property type="match status" value="1"/>
</dbReference>
<dbReference type="PROSITE" id="PS50862">
    <property type="entry name" value="AA_TRNA_LIGASE_II"/>
    <property type="match status" value="1"/>
</dbReference>
<name>SYS_UREP2</name>
<reference key="1">
    <citation type="submission" date="2008-02" db="EMBL/GenBank/DDBJ databases">
        <title>Genome sequence of Ureaplasma parvum serovar 3.</title>
        <authorList>
            <person name="Methe B.A."/>
            <person name="Glass J."/>
            <person name="Waites K."/>
            <person name="Shrivastava S."/>
        </authorList>
    </citation>
    <scope>NUCLEOTIDE SEQUENCE [LARGE SCALE GENOMIC DNA]</scope>
    <source>
        <strain>ATCC 27815 / 27 / NCTC 11736</strain>
    </source>
</reference>
<proteinExistence type="inferred from homology"/>
<sequence>MFDINLIRKDIATTKEKMLNKKVPSNLFDQIFDLDVLVRSLMQQEQNLNAKKNQLSKEIGILAKNKDPKLQQTLDLVNNIKNELQDISLTLSNKQDELNKLLLVIPNMPDDSVPIGNDENDNVEIKKVFKPKKFDFLPLAHWDLAVKNKLIDFDKSTKITGSRFIIYTNFGARLYRALQQFCLDMNVKAGFSEIWAPVIVNQESLIGSGNLPKFADDLFKLENSNYYLSPTAEVQLTNLHRNEILKASDLPLYYTALTPCFRSEAGSAGRDVRGVIRQHQFHKVELVKLCKPEDSFKELESMTRQAESILEALELPYRRIVLCTGDLGFSSAKTYDLEVWLPSYNAYKEISSCSNCTNFQARRAKIRYKETIDATTELVHTLNGSSLAIDRLWAAIVENYQQEDGSINIPKVLKKYIY</sequence>